<keyword id="KW-0028">Amino-acid biosynthesis</keyword>
<keyword id="KW-0057">Aromatic amino acid biosynthesis</keyword>
<keyword id="KW-0067">ATP-binding</keyword>
<keyword id="KW-0963">Cytoplasm</keyword>
<keyword id="KW-0418">Kinase</keyword>
<keyword id="KW-0460">Magnesium</keyword>
<keyword id="KW-0479">Metal-binding</keyword>
<keyword id="KW-0547">Nucleotide-binding</keyword>
<keyword id="KW-0808">Transferase</keyword>
<gene>
    <name evidence="1" type="primary">aroK</name>
    <name type="ordered locus">Paes_1516</name>
</gene>
<accession>B4S8Z9</accession>
<evidence type="ECO:0000255" key="1">
    <source>
        <dbReference type="HAMAP-Rule" id="MF_00109"/>
    </source>
</evidence>
<protein>
    <recommendedName>
        <fullName evidence="1">Shikimate kinase</fullName>
        <shortName evidence="1">SK</shortName>
        <ecNumber evidence="1">2.7.1.71</ecNumber>
    </recommendedName>
</protein>
<feature type="chain" id="PRO_1000094402" description="Shikimate kinase">
    <location>
        <begin position="1"/>
        <end position="197"/>
    </location>
</feature>
<feature type="binding site" evidence="1">
    <location>
        <begin position="14"/>
        <end position="19"/>
    </location>
    <ligand>
        <name>ATP</name>
        <dbReference type="ChEBI" id="CHEBI:30616"/>
    </ligand>
</feature>
<feature type="binding site" evidence="1">
    <location>
        <position position="18"/>
    </location>
    <ligand>
        <name>Mg(2+)</name>
        <dbReference type="ChEBI" id="CHEBI:18420"/>
    </ligand>
</feature>
<feature type="binding site" evidence="1">
    <location>
        <position position="36"/>
    </location>
    <ligand>
        <name>substrate</name>
    </ligand>
</feature>
<feature type="binding site" evidence="1">
    <location>
        <position position="60"/>
    </location>
    <ligand>
        <name>substrate</name>
    </ligand>
</feature>
<feature type="binding site" evidence="1">
    <location>
        <position position="82"/>
    </location>
    <ligand>
        <name>substrate</name>
    </ligand>
</feature>
<feature type="binding site" evidence="1">
    <location>
        <position position="120"/>
    </location>
    <ligand>
        <name>ATP</name>
        <dbReference type="ChEBI" id="CHEBI:30616"/>
    </ligand>
</feature>
<feature type="binding site" evidence="1">
    <location>
        <position position="147"/>
    </location>
    <ligand>
        <name>substrate</name>
    </ligand>
</feature>
<proteinExistence type="inferred from homology"/>
<dbReference type="EC" id="2.7.1.71" evidence="1"/>
<dbReference type="EMBL" id="CP001108">
    <property type="protein sequence ID" value="ACF46536.1"/>
    <property type="molecule type" value="Genomic_DNA"/>
</dbReference>
<dbReference type="RefSeq" id="WP_012506069.1">
    <property type="nucleotide sequence ID" value="NC_011059.1"/>
</dbReference>
<dbReference type="SMR" id="B4S8Z9"/>
<dbReference type="STRING" id="290512.Paes_1516"/>
<dbReference type="KEGG" id="paa:Paes_1516"/>
<dbReference type="eggNOG" id="COG0703">
    <property type="taxonomic scope" value="Bacteria"/>
</dbReference>
<dbReference type="HOGENOM" id="CLU_057607_2_1_10"/>
<dbReference type="UniPathway" id="UPA00053">
    <property type="reaction ID" value="UER00088"/>
</dbReference>
<dbReference type="Proteomes" id="UP000002725">
    <property type="component" value="Chromosome"/>
</dbReference>
<dbReference type="GO" id="GO:0005829">
    <property type="term" value="C:cytosol"/>
    <property type="evidence" value="ECO:0007669"/>
    <property type="project" value="TreeGrafter"/>
</dbReference>
<dbReference type="GO" id="GO:0005524">
    <property type="term" value="F:ATP binding"/>
    <property type="evidence" value="ECO:0007669"/>
    <property type="project" value="UniProtKB-UniRule"/>
</dbReference>
<dbReference type="GO" id="GO:0000287">
    <property type="term" value="F:magnesium ion binding"/>
    <property type="evidence" value="ECO:0007669"/>
    <property type="project" value="UniProtKB-UniRule"/>
</dbReference>
<dbReference type="GO" id="GO:0004765">
    <property type="term" value="F:shikimate kinase activity"/>
    <property type="evidence" value="ECO:0007669"/>
    <property type="project" value="UniProtKB-UniRule"/>
</dbReference>
<dbReference type="GO" id="GO:0008652">
    <property type="term" value="P:amino acid biosynthetic process"/>
    <property type="evidence" value="ECO:0007669"/>
    <property type="project" value="UniProtKB-KW"/>
</dbReference>
<dbReference type="GO" id="GO:0009073">
    <property type="term" value="P:aromatic amino acid family biosynthetic process"/>
    <property type="evidence" value="ECO:0007669"/>
    <property type="project" value="UniProtKB-KW"/>
</dbReference>
<dbReference type="GO" id="GO:0009423">
    <property type="term" value="P:chorismate biosynthetic process"/>
    <property type="evidence" value="ECO:0007669"/>
    <property type="project" value="UniProtKB-UniRule"/>
</dbReference>
<dbReference type="CDD" id="cd00464">
    <property type="entry name" value="SK"/>
    <property type="match status" value="1"/>
</dbReference>
<dbReference type="Gene3D" id="3.40.50.300">
    <property type="entry name" value="P-loop containing nucleotide triphosphate hydrolases"/>
    <property type="match status" value="1"/>
</dbReference>
<dbReference type="HAMAP" id="MF_00109">
    <property type="entry name" value="Shikimate_kinase"/>
    <property type="match status" value="1"/>
</dbReference>
<dbReference type="InterPro" id="IPR027417">
    <property type="entry name" value="P-loop_NTPase"/>
</dbReference>
<dbReference type="InterPro" id="IPR031322">
    <property type="entry name" value="Shikimate/glucono_kinase"/>
</dbReference>
<dbReference type="InterPro" id="IPR000623">
    <property type="entry name" value="Shikimate_kinase/TSH1"/>
</dbReference>
<dbReference type="InterPro" id="IPR023000">
    <property type="entry name" value="Shikimate_kinase_CS"/>
</dbReference>
<dbReference type="PANTHER" id="PTHR21087">
    <property type="entry name" value="SHIKIMATE KINASE"/>
    <property type="match status" value="1"/>
</dbReference>
<dbReference type="PANTHER" id="PTHR21087:SF16">
    <property type="entry name" value="SHIKIMATE KINASE 1, CHLOROPLASTIC"/>
    <property type="match status" value="1"/>
</dbReference>
<dbReference type="Pfam" id="PF01202">
    <property type="entry name" value="SKI"/>
    <property type="match status" value="1"/>
</dbReference>
<dbReference type="PRINTS" id="PR01100">
    <property type="entry name" value="SHIKIMTKNASE"/>
</dbReference>
<dbReference type="SUPFAM" id="SSF52540">
    <property type="entry name" value="P-loop containing nucleoside triphosphate hydrolases"/>
    <property type="match status" value="1"/>
</dbReference>
<dbReference type="PROSITE" id="PS01128">
    <property type="entry name" value="SHIKIMATE_KINASE"/>
    <property type="match status" value="1"/>
</dbReference>
<sequence length="197" mass="22481">MKQPSLIYLTGFSGSGKSTIGPLLANSLGYDFVDLDQQIEHLAGKTINRIFTEEGEAHFRDLELMVLQNYSGKSELVVSLGGGLLQNDRCFSLIISTGTLVYLHSNPLVLAKRLSHKSDRPLMKGEDGQRLSRDAIEQKILNMLEQREPRYKTAQITVETDTKRIGTTVEELTRKIERYIRRCEKKQLERNTKQRKQ</sequence>
<name>AROK_PROA2</name>
<organism>
    <name type="scientific">Prosthecochloris aestuarii (strain DSM 271 / SK 413)</name>
    <dbReference type="NCBI Taxonomy" id="290512"/>
    <lineage>
        <taxon>Bacteria</taxon>
        <taxon>Pseudomonadati</taxon>
        <taxon>Chlorobiota</taxon>
        <taxon>Chlorobiia</taxon>
        <taxon>Chlorobiales</taxon>
        <taxon>Chlorobiaceae</taxon>
        <taxon>Prosthecochloris</taxon>
    </lineage>
</organism>
<comment type="function">
    <text evidence="1">Catalyzes the specific phosphorylation of the 3-hydroxyl group of shikimic acid using ATP as a cosubstrate.</text>
</comment>
<comment type="catalytic activity">
    <reaction evidence="1">
        <text>shikimate + ATP = 3-phosphoshikimate + ADP + H(+)</text>
        <dbReference type="Rhea" id="RHEA:13121"/>
        <dbReference type="ChEBI" id="CHEBI:15378"/>
        <dbReference type="ChEBI" id="CHEBI:30616"/>
        <dbReference type="ChEBI" id="CHEBI:36208"/>
        <dbReference type="ChEBI" id="CHEBI:145989"/>
        <dbReference type="ChEBI" id="CHEBI:456216"/>
        <dbReference type="EC" id="2.7.1.71"/>
    </reaction>
</comment>
<comment type="cofactor">
    <cofactor evidence="1">
        <name>Mg(2+)</name>
        <dbReference type="ChEBI" id="CHEBI:18420"/>
    </cofactor>
    <text evidence="1">Binds 1 Mg(2+) ion per subunit.</text>
</comment>
<comment type="pathway">
    <text evidence="1">Metabolic intermediate biosynthesis; chorismate biosynthesis; chorismate from D-erythrose 4-phosphate and phosphoenolpyruvate: step 5/7.</text>
</comment>
<comment type="subunit">
    <text evidence="1">Monomer.</text>
</comment>
<comment type="subcellular location">
    <subcellularLocation>
        <location evidence="1">Cytoplasm</location>
    </subcellularLocation>
</comment>
<comment type="similarity">
    <text evidence="1">Belongs to the shikimate kinase family.</text>
</comment>
<reference key="1">
    <citation type="submission" date="2008-06" db="EMBL/GenBank/DDBJ databases">
        <title>Complete sequence of chromosome of Prosthecochloris aestuarii DSM 271.</title>
        <authorList>
            <consortium name="US DOE Joint Genome Institute"/>
            <person name="Lucas S."/>
            <person name="Copeland A."/>
            <person name="Lapidus A."/>
            <person name="Glavina del Rio T."/>
            <person name="Dalin E."/>
            <person name="Tice H."/>
            <person name="Bruce D."/>
            <person name="Goodwin L."/>
            <person name="Pitluck S."/>
            <person name="Schmutz J."/>
            <person name="Larimer F."/>
            <person name="Land M."/>
            <person name="Hauser L."/>
            <person name="Kyrpides N."/>
            <person name="Anderson I."/>
            <person name="Liu Z."/>
            <person name="Li T."/>
            <person name="Zhao F."/>
            <person name="Overmann J."/>
            <person name="Bryant D.A."/>
            <person name="Richardson P."/>
        </authorList>
    </citation>
    <scope>NUCLEOTIDE SEQUENCE [LARGE SCALE GENOMIC DNA]</scope>
    <source>
        <strain>DSM 271 / SK 413</strain>
    </source>
</reference>